<accession>Q3JYM8</accession>
<name>RUVA_STRA1</name>
<protein>
    <recommendedName>
        <fullName evidence="1">Holliday junction branch migration complex subunit RuvA</fullName>
    </recommendedName>
</protein>
<gene>
    <name evidence="1" type="primary">ruvA</name>
    <name type="ordered locus">SAK_2035</name>
</gene>
<reference key="1">
    <citation type="journal article" date="2005" name="Proc. Natl. Acad. Sci. U.S.A.">
        <title>Genome analysis of multiple pathogenic isolates of Streptococcus agalactiae: implications for the microbial 'pan-genome'.</title>
        <authorList>
            <person name="Tettelin H."/>
            <person name="Masignani V."/>
            <person name="Cieslewicz M.J."/>
            <person name="Donati C."/>
            <person name="Medini D."/>
            <person name="Ward N.L."/>
            <person name="Angiuoli S.V."/>
            <person name="Crabtree J."/>
            <person name="Jones A.L."/>
            <person name="Durkin A.S."/>
            <person name="DeBoy R.T."/>
            <person name="Davidsen T.M."/>
            <person name="Mora M."/>
            <person name="Scarselli M."/>
            <person name="Margarit y Ros I."/>
            <person name="Peterson J.D."/>
            <person name="Hauser C.R."/>
            <person name="Sundaram J.P."/>
            <person name="Nelson W.C."/>
            <person name="Madupu R."/>
            <person name="Brinkac L.M."/>
            <person name="Dodson R.J."/>
            <person name="Rosovitz M.J."/>
            <person name="Sullivan S.A."/>
            <person name="Daugherty S.C."/>
            <person name="Haft D.H."/>
            <person name="Selengut J."/>
            <person name="Gwinn M.L."/>
            <person name="Zhou L."/>
            <person name="Zafar N."/>
            <person name="Khouri H."/>
            <person name="Radune D."/>
            <person name="Dimitrov G."/>
            <person name="Watkins K."/>
            <person name="O'Connor K.J."/>
            <person name="Smith S."/>
            <person name="Utterback T.R."/>
            <person name="White O."/>
            <person name="Rubens C.E."/>
            <person name="Grandi G."/>
            <person name="Madoff L.C."/>
            <person name="Kasper D.L."/>
            <person name="Telford J.L."/>
            <person name="Wessels M.R."/>
            <person name="Rappuoli R."/>
            <person name="Fraser C.M."/>
        </authorList>
    </citation>
    <scope>NUCLEOTIDE SEQUENCE [LARGE SCALE GENOMIC DNA]</scope>
    <source>
        <strain>ATCC 27591 / A909 / CDC SS700</strain>
    </source>
</reference>
<feature type="chain" id="PRO_0000224912" description="Holliday junction branch migration complex subunit RuvA">
    <location>
        <begin position="1"/>
        <end position="196"/>
    </location>
</feature>
<feature type="region of interest" description="Domain I" evidence="1">
    <location>
        <begin position="1"/>
        <end position="63"/>
    </location>
</feature>
<feature type="region of interest" description="Domain II" evidence="1">
    <location>
        <begin position="64"/>
        <end position="142"/>
    </location>
</feature>
<feature type="region of interest" description="Flexible linker" evidence="1">
    <location>
        <begin position="143"/>
        <end position="148"/>
    </location>
</feature>
<feature type="region of interest" description="Domain III" evidence="1">
    <location>
        <begin position="148"/>
        <end position="196"/>
    </location>
</feature>
<evidence type="ECO:0000255" key="1">
    <source>
        <dbReference type="HAMAP-Rule" id="MF_00031"/>
    </source>
</evidence>
<organism>
    <name type="scientific">Streptococcus agalactiae serotype Ia (strain ATCC 27591 / A909 / CDC SS700)</name>
    <dbReference type="NCBI Taxonomy" id="205921"/>
    <lineage>
        <taxon>Bacteria</taxon>
        <taxon>Bacillati</taxon>
        <taxon>Bacillota</taxon>
        <taxon>Bacilli</taxon>
        <taxon>Lactobacillales</taxon>
        <taxon>Streptococcaceae</taxon>
        <taxon>Streptococcus</taxon>
    </lineage>
</organism>
<keyword id="KW-0963">Cytoplasm</keyword>
<keyword id="KW-0227">DNA damage</keyword>
<keyword id="KW-0233">DNA recombination</keyword>
<keyword id="KW-0234">DNA repair</keyword>
<keyword id="KW-0238">DNA-binding</keyword>
<proteinExistence type="inferred from homology"/>
<sequence>MYDYIKGKLSKITAKFIVVETAGLGYVIYVANPYSFSGYVNQEVTIYLHQVIRDDAHLLFGFHTENEKEIFLNLISVSGIGPTTALAIIAVDDNEGLVSAIDNSDIKYLTKFPKIGKKTAQQMILDLSGKFVEASGESATSRKVSSEQNSNLEEAMEALLALGYKATELKKVKAFFEGTNETVEQYIKSSLKMLMK</sequence>
<dbReference type="EMBL" id="CP000114">
    <property type="protein sequence ID" value="ABA45620.1"/>
    <property type="molecule type" value="Genomic_DNA"/>
</dbReference>
<dbReference type="RefSeq" id="WP_000272490.1">
    <property type="nucleotide sequence ID" value="NC_007432.1"/>
</dbReference>
<dbReference type="SMR" id="Q3JYM8"/>
<dbReference type="KEGG" id="sak:SAK_2035"/>
<dbReference type="HOGENOM" id="CLU_087936_1_0_9"/>
<dbReference type="GO" id="GO:0005737">
    <property type="term" value="C:cytoplasm"/>
    <property type="evidence" value="ECO:0007669"/>
    <property type="project" value="UniProtKB-SubCell"/>
</dbReference>
<dbReference type="GO" id="GO:0009379">
    <property type="term" value="C:Holliday junction helicase complex"/>
    <property type="evidence" value="ECO:0007669"/>
    <property type="project" value="InterPro"/>
</dbReference>
<dbReference type="GO" id="GO:0048476">
    <property type="term" value="C:Holliday junction resolvase complex"/>
    <property type="evidence" value="ECO:0007669"/>
    <property type="project" value="UniProtKB-UniRule"/>
</dbReference>
<dbReference type="GO" id="GO:0005524">
    <property type="term" value="F:ATP binding"/>
    <property type="evidence" value="ECO:0007669"/>
    <property type="project" value="InterPro"/>
</dbReference>
<dbReference type="GO" id="GO:0000400">
    <property type="term" value="F:four-way junction DNA binding"/>
    <property type="evidence" value="ECO:0007669"/>
    <property type="project" value="UniProtKB-UniRule"/>
</dbReference>
<dbReference type="GO" id="GO:0009378">
    <property type="term" value="F:four-way junction helicase activity"/>
    <property type="evidence" value="ECO:0007669"/>
    <property type="project" value="InterPro"/>
</dbReference>
<dbReference type="GO" id="GO:0006310">
    <property type="term" value="P:DNA recombination"/>
    <property type="evidence" value="ECO:0007669"/>
    <property type="project" value="UniProtKB-UniRule"/>
</dbReference>
<dbReference type="GO" id="GO:0006281">
    <property type="term" value="P:DNA repair"/>
    <property type="evidence" value="ECO:0007669"/>
    <property type="project" value="UniProtKB-UniRule"/>
</dbReference>
<dbReference type="CDD" id="cd14332">
    <property type="entry name" value="UBA_RuvA_C"/>
    <property type="match status" value="1"/>
</dbReference>
<dbReference type="Gene3D" id="1.10.150.20">
    <property type="entry name" value="5' to 3' exonuclease, C-terminal subdomain"/>
    <property type="match status" value="1"/>
</dbReference>
<dbReference type="Gene3D" id="1.10.8.10">
    <property type="entry name" value="DNA helicase RuvA subunit, C-terminal domain"/>
    <property type="match status" value="1"/>
</dbReference>
<dbReference type="Gene3D" id="2.40.50.140">
    <property type="entry name" value="Nucleic acid-binding proteins"/>
    <property type="match status" value="1"/>
</dbReference>
<dbReference type="HAMAP" id="MF_00031">
    <property type="entry name" value="DNA_HJ_migration_RuvA"/>
    <property type="match status" value="1"/>
</dbReference>
<dbReference type="InterPro" id="IPR013849">
    <property type="entry name" value="DNA_helicase_Holl-junc_RuvA_I"/>
</dbReference>
<dbReference type="InterPro" id="IPR003583">
    <property type="entry name" value="Hlx-hairpin-Hlx_DNA-bd_motif"/>
</dbReference>
<dbReference type="InterPro" id="IPR012340">
    <property type="entry name" value="NA-bd_OB-fold"/>
</dbReference>
<dbReference type="InterPro" id="IPR000085">
    <property type="entry name" value="RuvA"/>
</dbReference>
<dbReference type="InterPro" id="IPR010994">
    <property type="entry name" value="RuvA_2-like"/>
</dbReference>
<dbReference type="InterPro" id="IPR011114">
    <property type="entry name" value="RuvA_C"/>
</dbReference>
<dbReference type="InterPro" id="IPR036267">
    <property type="entry name" value="RuvA_C_sf"/>
</dbReference>
<dbReference type="NCBIfam" id="TIGR00084">
    <property type="entry name" value="ruvA"/>
    <property type="match status" value="1"/>
</dbReference>
<dbReference type="Pfam" id="PF14520">
    <property type="entry name" value="HHH_5"/>
    <property type="match status" value="1"/>
</dbReference>
<dbReference type="Pfam" id="PF07499">
    <property type="entry name" value="RuvA_C"/>
    <property type="match status" value="1"/>
</dbReference>
<dbReference type="Pfam" id="PF01330">
    <property type="entry name" value="RuvA_N"/>
    <property type="match status" value="1"/>
</dbReference>
<dbReference type="SMART" id="SM00278">
    <property type="entry name" value="HhH1"/>
    <property type="match status" value="2"/>
</dbReference>
<dbReference type="SUPFAM" id="SSF46929">
    <property type="entry name" value="DNA helicase RuvA subunit, C-terminal domain"/>
    <property type="match status" value="1"/>
</dbReference>
<dbReference type="SUPFAM" id="SSF50249">
    <property type="entry name" value="Nucleic acid-binding proteins"/>
    <property type="match status" value="1"/>
</dbReference>
<dbReference type="SUPFAM" id="SSF47781">
    <property type="entry name" value="RuvA domain 2-like"/>
    <property type="match status" value="1"/>
</dbReference>
<comment type="function">
    <text evidence="1">The RuvA-RuvB-RuvC complex processes Holliday junction (HJ) DNA during genetic recombination and DNA repair, while the RuvA-RuvB complex plays an important role in the rescue of blocked DNA replication forks via replication fork reversal (RFR). RuvA specifically binds to HJ cruciform DNA, conferring on it an open structure. The RuvB hexamer acts as an ATP-dependent pump, pulling dsDNA into and through the RuvAB complex. HJ branch migration allows RuvC to scan DNA until it finds its consensus sequence, where it cleaves and resolves the cruciform DNA.</text>
</comment>
<comment type="subunit">
    <text evidence="1">Homotetramer. Forms an RuvA(8)-RuvB(12)-Holliday junction (HJ) complex. HJ DNA is sandwiched between 2 RuvA tetramers; dsDNA enters through RuvA and exits via RuvB. An RuvB hexamer assembles on each DNA strand where it exits the tetramer. Each RuvB hexamer is contacted by two RuvA subunits (via domain III) on 2 adjacent RuvB subunits; this complex drives branch migration. In the full resolvosome a probable DNA-RuvA(4)-RuvB(12)-RuvC(2) complex forms which resolves the HJ.</text>
</comment>
<comment type="subcellular location">
    <subcellularLocation>
        <location evidence="1">Cytoplasm</location>
    </subcellularLocation>
</comment>
<comment type="domain">
    <text evidence="1">Has three domains with a flexible linker between the domains II and III and assumes an 'L' shape. Domain III is highly mobile and contacts RuvB.</text>
</comment>
<comment type="similarity">
    <text evidence="1">Belongs to the RuvA family.</text>
</comment>